<feature type="chain" id="PRO_0000131358" description="Large ribosomal subunit protein uL18">
    <location>
        <begin position="1"/>
        <end position="118"/>
    </location>
</feature>
<feature type="region of interest" description="Disordered" evidence="2">
    <location>
        <begin position="1"/>
        <end position="25"/>
    </location>
</feature>
<feature type="compositionally biased region" description="Basic residues" evidence="2">
    <location>
        <begin position="10"/>
        <end position="20"/>
    </location>
</feature>
<proteinExistence type="inferred from homology"/>
<organism>
    <name type="scientific">Streptococcus pneumoniae (strain ATCC BAA-255 / R6)</name>
    <dbReference type="NCBI Taxonomy" id="171101"/>
    <lineage>
        <taxon>Bacteria</taxon>
        <taxon>Bacillati</taxon>
        <taxon>Bacillota</taxon>
        <taxon>Bacilli</taxon>
        <taxon>Lactobacillales</taxon>
        <taxon>Streptococcaceae</taxon>
        <taxon>Streptococcus</taxon>
    </lineage>
</organism>
<protein>
    <recommendedName>
        <fullName evidence="1">Large ribosomal subunit protein uL18</fullName>
    </recommendedName>
    <alternativeName>
        <fullName evidence="3">50S ribosomal protein L18</fullName>
    </alternativeName>
</protein>
<evidence type="ECO:0000255" key="1">
    <source>
        <dbReference type="HAMAP-Rule" id="MF_01337"/>
    </source>
</evidence>
<evidence type="ECO:0000256" key="2">
    <source>
        <dbReference type="SAM" id="MobiDB-lite"/>
    </source>
</evidence>
<evidence type="ECO:0000305" key="3"/>
<reference key="1">
    <citation type="journal article" date="2001" name="J. Bacteriol.">
        <title>Genome of the bacterium Streptococcus pneumoniae strain R6.</title>
        <authorList>
            <person name="Hoskins J."/>
            <person name="Alborn W.E. Jr."/>
            <person name="Arnold J."/>
            <person name="Blaszczak L.C."/>
            <person name="Burgett S."/>
            <person name="DeHoff B.S."/>
            <person name="Estrem S.T."/>
            <person name="Fritz L."/>
            <person name="Fu D.-J."/>
            <person name="Fuller W."/>
            <person name="Geringer C."/>
            <person name="Gilmour R."/>
            <person name="Glass J.S."/>
            <person name="Khoja H."/>
            <person name="Kraft A.R."/>
            <person name="Lagace R.E."/>
            <person name="LeBlanc D.J."/>
            <person name="Lee L.N."/>
            <person name="Lefkowitz E.J."/>
            <person name="Lu J."/>
            <person name="Matsushima P."/>
            <person name="McAhren S.M."/>
            <person name="McHenney M."/>
            <person name="McLeaster K."/>
            <person name="Mundy C.W."/>
            <person name="Nicas T.I."/>
            <person name="Norris F.H."/>
            <person name="O'Gara M."/>
            <person name="Peery R.B."/>
            <person name="Robertson G.T."/>
            <person name="Rockey P."/>
            <person name="Sun P.-M."/>
            <person name="Winkler M.E."/>
            <person name="Yang Y."/>
            <person name="Young-Bellido M."/>
            <person name="Zhao G."/>
            <person name="Zook C.A."/>
            <person name="Baltz R.H."/>
            <person name="Jaskunas S.R."/>
            <person name="Rosteck P.R. Jr."/>
            <person name="Skatrud P.L."/>
            <person name="Glass J.I."/>
        </authorList>
    </citation>
    <scope>NUCLEOTIDE SEQUENCE [LARGE SCALE GENOMIC DNA]</scope>
    <source>
        <strain>ATCC BAA-255 / R6</strain>
    </source>
</reference>
<name>RL18_STRR6</name>
<accession>Q8CWV2</accession>
<dbReference type="EMBL" id="AE007317">
    <property type="protein sequence ID" value="AAK99009.1"/>
    <property type="molecule type" value="Genomic_DNA"/>
</dbReference>
<dbReference type="PIR" id="E95026">
    <property type="entry name" value="E95026"/>
</dbReference>
<dbReference type="PIR" id="E97897">
    <property type="entry name" value="E97897"/>
</dbReference>
<dbReference type="RefSeq" id="NP_357799.1">
    <property type="nucleotide sequence ID" value="NC_003098.1"/>
</dbReference>
<dbReference type="RefSeq" id="WP_000624044.1">
    <property type="nucleotide sequence ID" value="NC_003098.1"/>
</dbReference>
<dbReference type="SMR" id="Q8CWV2"/>
<dbReference type="STRING" id="171101.spr0205"/>
<dbReference type="GeneID" id="93738973"/>
<dbReference type="KEGG" id="spr:spr0205"/>
<dbReference type="PATRIC" id="fig|171101.6.peg.237"/>
<dbReference type="eggNOG" id="COG0256">
    <property type="taxonomic scope" value="Bacteria"/>
</dbReference>
<dbReference type="HOGENOM" id="CLU_098841_0_1_9"/>
<dbReference type="PRO" id="PR:Q8CWV2"/>
<dbReference type="Proteomes" id="UP000000586">
    <property type="component" value="Chromosome"/>
</dbReference>
<dbReference type="GO" id="GO:0022625">
    <property type="term" value="C:cytosolic large ribosomal subunit"/>
    <property type="evidence" value="ECO:0000318"/>
    <property type="project" value="GO_Central"/>
</dbReference>
<dbReference type="GO" id="GO:0008097">
    <property type="term" value="F:5S rRNA binding"/>
    <property type="evidence" value="ECO:0000318"/>
    <property type="project" value="GO_Central"/>
</dbReference>
<dbReference type="GO" id="GO:0003735">
    <property type="term" value="F:structural constituent of ribosome"/>
    <property type="evidence" value="ECO:0007669"/>
    <property type="project" value="InterPro"/>
</dbReference>
<dbReference type="GO" id="GO:0006412">
    <property type="term" value="P:translation"/>
    <property type="evidence" value="ECO:0007669"/>
    <property type="project" value="UniProtKB-UniRule"/>
</dbReference>
<dbReference type="CDD" id="cd00432">
    <property type="entry name" value="Ribosomal_L18_L5e"/>
    <property type="match status" value="1"/>
</dbReference>
<dbReference type="FunFam" id="3.30.420.100:FF:000001">
    <property type="entry name" value="50S ribosomal protein L18"/>
    <property type="match status" value="1"/>
</dbReference>
<dbReference type="Gene3D" id="3.30.420.100">
    <property type="match status" value="1"/>
</dbReference>
<dbReference type="HAMAP" id="MF_01337_B">
    <property type="entry name" value="Ribosomal_uL18_B"/>
    <property type="match status" value="1"/>
</dbReference>
<dbReference type="InterPro" id="IPR004389">
    <property type="entry name" value="Ribosomal_uL18_bac-type"/>
</dbReference>
<dbReference type="InterPro" id="IPR005484">
    <property type="entry name" value="Ribosomal_uL18_bac/euk"/>
</dbReference>
<dbReference type="NCBIfam" id="TIGR00060">
    <property type="entry name" value="L18_bact"/>
    <property type="match status" value="1"/>
</dbReference>
<dbReference type="PANTHER" id="PTHR12899">
    <property type="entry name" value="39S RIBOSOMAL PROTEIN L18, MITOCHONDRIAL"/>
    <property type="match status" value="1"/>
</dbReference>
<dbReference type="PANTHER" id="PTHR12899:SF3">
    <property type="entry name" value="LARGE RIBOSOMAL SUBUNIT PROTEIN UL18M"/>
    <property type="match status" value="1"/>
</dbReference>
<dbReference type="Pfam" id="PF00861">
    <property type="entry name" value="Ribosomal_L18p"/>
    <property type="match status" value="1"/>
</dbReference>
<dbReference type="SUPFAM" id="SSF53137">
    <property type="entry name" value="Translational machinery components"/>
    <property type="match status" value="1"/>
</dbReference>
<keyword id="KW-1185">Reference proteome</keyword>
<keyword id="KW-0687">Ribonucleoprotein</keyword>
<keyword id="KW-0689">Ribosomal protein</keyword>
<keyword id="KW-0694">RNA-binding</keyword>
<keyword id="KW-0699">rRNA-binding</keyword>
<gene>
    <name evidence="1" type="primary">rplR</name>
    <name type="ordered locus">spr0205</name>
</gene>
<comment type="function">
    <text evidence="1">This is one of the proteins that bind and probably mediate the attachment of the 5S RNA into the large ribosomal subunit, where it forms part of the central protuberance.</text>
</comment>
<comment type="subunit">
    <text evidence="1">Part of the 50S ribosomal subunit; part of the 5S rRNA/L5/L18/L25 subcomplex. Contacts the 5S and 23S rRNAs.</text>
</comment>
<comment type="similarity">
    <text evidence="1">Belongs to the universal ribosomal protein uL18 family.</text>
</comment>
<sequence>MISKPDKNKLRQKRHRRVRGKLSGTADRPRLNVFRSNTGIYAQVIDDVAGVTLASASTLDKEVSKGTKTEQAVAVGKLVAERANAKGISEVVFDRGGYLYHGRVKALADAARENGLKF</sequence>